<protein>
    <recommendedName>
        <fullName evidence="1">Large ribosomal subunit protein bL32</fullName>
    </recommendedName>
    <alternativeName>
        <fullName evidence="3">50S ribosomal protein L32</fullName>
    </alternativeName>
</protein>
<dbReference type="EMBL" id="CU928164">
    <property type="protein sequence ID" value="CAR18199.1"/>
    <property type="molecule type" value="Genomic_DNA"/>
</dbReference>
<dbReference type="RefSeq" id="WP_000290727.1">
    <property type="nucleotide sequence ID" value="NC_011750.1"/>
</dbReference>
<dbReference type="RefSeq" id="YP_002408037.1">
    <property type="nucleotide sequence ID" value="NC_011750.1"/>
</dbReference>
<dbReference type="SMR" id="B7NKJ1"/>
<dbReference type="STRING" id="585057.ECIAI39_2072"/>
<dbReference type="GeneID" id="93776319"/>
<dbReference type="KEGG" id="ect:ECIAI39_2072"/>
<dbReference type="PATRIC" id="fig|585057.6.peg.2153"/>
<dbReference type="HOGENOM" id="CLU_129084_2_1_6"/>
<dbReference type="Proteomes" id="UP000000749">
    <property type="component" value="Chromosome"/>
</dbReference>
<dbReference type="GO" id="GO:0015934">
    <property type="term" value="C:large ribosomal subunit"/>
    <property type="evidence" value="ECO:0007669"/>
    <property type="project" value="InterPro"/>
</dbReference>
<dbReference type="GO" id="GO:0003735">
    <property type="term" value="F:structural constituent of ribosome"/>
    <property type="evidence" value="ECO:0007669"/>
    <property type="project" value="InterPro"/>
</dbReference>
<dbReference type="GO" id="GO:0006412">
    <property type="term" value="P:translation"/>
    <property type="evidence" value="ECO:0007669"/>
    <property type="project" value="UniProtKB-UniRule"/>
</dbReference>
<dbReference type="HAMAP" id="MF_00340">
    <property type="entry name" value="Ribosomal_bL32"/>
    <property type="match status" value="1"/>
</dbReference>
<dbReference type="InterPro" id="IPR002677">
    <property type="entry name" value="Ribosomal_bL32"/>
</dbReference>
<dbReference type="InterPro" id="IPR044957">
    <property type="entry name" value="Ribosomal_bL32_bact"/>
</dbReference>
<dbReference type="InterPro" id="IPR011332">
    <property type="entry name" value="Ribosomal_zn-bd"/>
</dbReference>
<dbReference type="NCBIfam" id="TIGR01031">
    <property type="entry name" value="rpmF_bact"/>
    <property type="match status" value="1"/>
</dbReference>
<dbReference type="PANTHER" id="PTHR35534">
    <property type="entry name" value="50S RIBOSOMAL PROTEIN L32"/>
    <property type="match status" value="1"/>
</dbReference>
<dbReference type="PANTHER" id="PTHR35534:SF1">
    <property type="entry name" value="LARGE RIBOSOMAL SUBUNIT PROTEIN BL32"/>
    <property type="match status" value="1"/>
</dbReference>
<dbReference type="Pfam" id="PF01783">
    <property type="entry name" value="Ribosomal_L32p"/>
    <property type="match status" value="1"/>
</dbReference>
<dbReference type="SUPFAM" id="SSF57829">
    <property type="entry name" value="Zn-binding ribosomal proteins"/>
    <property type="match status" value="1"/>
</dbReference>
<sequence>MAVQQNKPTRSKRGMRRSHDALTAVTSLSVDKTSGEKHLRHHITADGYYRGRKVIAK</sequence>
<accession>B7NKJ1</accession>
<gene>
    <name evidence="1" type="primary">rpmF</name>
    <name type="ordered locus">ECIAI39_2072</name>
</gene>
<comment type="similarity">
    <text evidence="1">Belongs to the bacterial ribosomal protein bL32 family.</text>
</comment>
<name>RL32_ECO7I</name>
<proteinExistence type="inferred from homology"/>
<reference key="1">
    <citation type="journal article" date="2009" name="PLoS Genet.">
        <title>Organised genome dynamics in the Escherichia coli species results in highly diverse adaptive paths.</title>
        <authorList>
            <person name="Touchon M."/>
            <person name="Hoede C."/>
            <person name="Tenaillon O."/>
            <person name="Barbe V."/>
            <person name="Baeriswyl S."/>
            <person name="Bidet P."/>
            <person name="Bingen E."/>
            <person name="Bonacorsi S."/>
            <person name="Bouchier C."/>
            <person name="Bouvet O."/>
            <person name="Calteau A."/>
            <person name="Chiapello H."/>
            <person name="Clermont O."/>
            <person name="Cruveiller S."/>
            <person name="Danchin A."/>
            <person name="Diard M."/>
            <person name="Dossat C."/>
            <person name="Karoui M.E."/>
            <person name="Frapy E."/>
            <person name="Garry L."/>
            <person name="Ghigo J.M."/>
            <person name="Gilles A.M."/>
            <person name="Johnson J."/>
            <person name="Le Bouguenec C."/>
            <person name="Lescat M."/>
            <person name="Mangenot S."/>
            <person name="Martinez-Jehanne V."/>
            <person name="Matic I."/>
            <person name="Nassif X."/>
            <person name="Oztas S."/>
            <person name="Petit M.A."/>
            <person name="Pichon C."/>
            <person name="Rouy Z."/>
            <person name="Ruf C.S."/>
            <person name="Schneider D."/>
            <person name="Tourret J."/>
            <person name="Vacherie B."/>
            <person name="Vallenet D."/>
            <person name="Medigue C."/>
            <person name="Rocha E.P.C."/>
            <person name="Denamur E."/>
        </authorList>
    </citation>
    <scope>NUCLEOTIDE SEQUENCE [LARGE SCALE GENOMIC DNA]</scope>
    <source>
        <strain>IAI39 / ExPEC</strain>
    </source>
</reference>
<keyword id="KW-0687">Ribonucleoprotein</keyword>
<keyword id="KW-0689">Ribosomal protein</keyword>
<evidence type="ECO:0000255" key="1">
    <source>
        <dbReference type="HAMAP-Rule" id="MF_00340"/>
    </source>
</evidence>
<evidence type="ECO:0000256" key="2">
    <source>
        <dbReference type="SAM" id="MobiDB-lite"/>
    </source>
</evidence>
<evidence type="ECO:0000305" key="3"/>
<organism>
    <name type="scientific">Escherichia coli O7:K1 (strain IAI39 / ExPEC)</name>
    <dbReference type="NCBI Taxonomy" id="585057"/>
    <lineage>
        <taxon>Bacteria</taxon>
        <taxon>Pseudomonadati</taxon>
        <taxon>Pseudomonadota</taxon>
        <taxon>Gammaproteobacteria</taxon>
        <taxon>Enterobacterales</taxon>
        <taxon>Enterobacteriaceae</taxon>
        <taxon>Escherichia</taxon>
    </lineage>
</organism>
<feature type="chain" id="PRO_1000120118" description="Large ribosomal subunit protein bL32">
    <location>
        <begin position="1"/>
        <end position="57"/>
    </location>
</feature>
<feature type="region of interest" description="Disordered" evidence="2">
    <location>
        <begin position="1"/>
        <end position="38"/>
    </location>
</feature>